<feature type="chain" id="PRO_0000261425" description="Synaptonemal complex central element protein 1">
    <location>
        <begin position="1"/>
        <end position="323"/>
    </location>
</feature>
<feature type="region of interest" description="Disordered" evidence="3">
    <location>
        <begin position="1"/>
        <end position="31"/>
    </location>
</feature>
<feature type="region of interest" description="Disordered" evidence="3">
    <location>
        <begin position="294"/>
        <end position="323"/>
    </location>
</feature>
<feature type="coiled-coil region" evidence="2">
    <location>
        <begin position="25"/>
        <end position="290"/>
    </location>
</feature>
<feature type="compositionally biased region" description="Polar residues" evidence="3">
    <location>
        <begin position="1"/>
        <end position="10"/>
    </location>
</feature>
<feature type="compositionally biased region" description="Basic and acidic residues" evidence="3">
    <location>
        <begin position="20"/>
        <end position="31"/>
    </location>
</feature>
<feature type="compositionally biased region" description="Basic and acidic residues" evidence="3">
    <location>
        <begin position="313"/>
        <end position="323"/>
    </location>
</feature>
<organism>
    <name type="scientific">Bos taurus</name>
    <name type="common">Bovine</name>
    <dbReference type="NCBI Taxonomy" id="9913"/>
    <lineage>
        <taxon>Eukaryota</taxon>
        <taxon>Metazoa</taxon>
        <taxon>Chordata</taxon>
        <taxon>Craniata</taxon>
        <taxon>Vertebrata</taxon>
        <taxon>Euteleostomi</taxon>
        <taxon>Mammalia</taxon>
        <taxon>Eutheria</taxon>
        <taxon>Laurasiatheria</taxon>
        <taxon>Artiodactyla</taxon>
        <taxon>Ruminantia</taxon>
        <taxon>Pecora</taxon>
        <taxon>Bovidae</taxon>
        <taxon>Bovinae</taxon>
        <taxon>Bos</taxon>
    </lineage>
</organism>
<accession>Q32LK9</accession>
<dbReference type="EMBL" id="BC109528">
    <property type="protein sequence ID" value="AAI09529.1"/>
    <property type="status" value="ALT_INIT"/>
    <property type="molecule type" value="mRNA"/>
</dbReference>
<dbReference type="RefSeq" id="NP_001033238.2">
    <property type="nucleotide sequence ID" value="NM_001038149.2"/>
</dbReference>
<dbReference type="SMR" id="Q32LK9"/>
<dbReference type="FunCoup" id="Q32LK9">
    <property type="interactions" value="146"/>
</dbReference>
<dbReference type="STRING" id="9913.ENSBTAP00000060304"/>
<dbReference type="PaxDb" id="9913-ENSBTAP00000046422"/>
<dbReference type="GeneID" id="529478"/>
<dbReference type="KEGG" id="bta:529478"/>
<dbReference type="CTD" id="93426"/>
<dbReference type="eggNOG" id="ENOG502S24D">
    <property type="taxonomic scope" value="Eukaryota"/>
</dbReference>
<dbReference type="HOGENOM" id="CLU_068366_0_0_1"/>
<dbReference type="InParanoid" id="Q32LK9"/>
<dbReference type="OrthoDB" id="8931744at2759"/>
<dbReference type="TreeFam" id="TF337303"/>
<dbReference type="Proteomes" id="UP000009136">
    <property type="component" value="Unplaced"/>
</dbReference>
<dbReference type="GO" id="GO:0005694">
    <property type="term" value="C:chromosome"/>
    <property type="evidence" value="ECO:0000250"/>
    <property type="project" value="UniProtKB"/>
</dbReference>
<dbReference type="GO" id="GO:0000795">
    <property type="term" value="C:synaptonemal complex"/>
    <property type="evidence" value="ECO:0000318"/>
    <property type="project" value="GO_Central"/>
</dbReference>
<dbReference type="GO" id="GO:0051301">
    <property type="term" value="P:cell division"/>
    <property type="evidence" value="ECO:0007669"/>
    <property type="project" value="UniProtKB-KW"/>
</dbReference>
<dbReference type="GO" id="GO:0007130">
    <property type="term" value="P:synaptonemal complex assembly"/>
    <property type="evidence" value="ECO:0007669"/>
    <property type="project" value="InterPro"/>
</dbReference>
<dbReference type="InterPro" id="IPR026676">
    <property type="entry name" value="SYCE1"/>
</dbReference>
<dbReference type="PANTHER" id="PTHR21731:SF0">
    <property type="entry name" value="SYNAPTONEMAL COMPLEX CENTRAL ELEMENT PROTEIN 1"/>
    <property type="match status" value="1"/>
</dbReference>
<dbReference type="PANTHER" id="PTHR21731">
    <property type="entry name" value="SYNAPTONEMAL COMPLEX CENTRAL ELEMENT PROTEIN 1-LIKE"/>
    <property type="match status" value="1"/>
</dbReference>
<dbReference type="Pfam" id="PF15233">
    <property type="entry name" value="SYCE1"/>
    <property type="match status" value="1"/>
</dbReference>
<evidence type="ECO:0000250" key="1">
    <source>
        <dbReference type="UniProtKB" id="Q9D495"/>
    </source>
</evidence>
<evidence type="ECO:0000255" key="2"/>
<evidence type="ECO:0000256" key="3">
    <source>
        <dbReference type="SAM" id="MobiDB-lite"/>
    </source>
</evidence>
<evidence type="ECO:0000305" key="4"/>
<reference key="1">
    <citation type="submission" date="2005-11" db="EMBL/GenBank/DDBJ databases">
        <authorList>
            <consortium name="NIH - Mammalian Gene Collection (MGC) project"/>
        </authorList>
    </citation>
    <scope>NUCLEOTIDE SEQUENCE [LARGE SCALE MRNA]</scope>
    <source>
        <strain>Crossbred X Angus</strain>
        <tissue>Liver</tissue>
    </source>
</reference>
<comment type="function">
    <text evidence="1">Major component of the transverse central element of synaptonemal complexes (SCS), formed between homologous chromosomes during meiotic prophase. Requires SYCP1 in order to be incorporated into the central element. May have a role in the synaptonemal complex assembly, stabilization and recombination.</text>
</comment>
<comment type="subunit">
    <text evidence="1">Homodimer. Found in a complex with SYCP1 and SYCE2. Interacts with SYCP1, SYCE2 and SYCE3. Interacts with SIX6OS1.</text>
</comment>
<comment type="subcellular location">
    <subcellularLocation>
        <location evidence="1">Nucleus</location>
    </subcellularLocation>
    <subcellularLocation>
        <location evidence="1">Chromosome</location>
    </subcellularLocation>
    <text evidence="1">Associates with chromatin. In prophase I stage of meiosis, localizes in the transverse central elements of the central region between lateral elements of the synaptonemal complexes. Found only where the chromosome cores are synapsed. Colocalizes with SYCE2 in the central elements.</text>
</comment>
<comment type="similarity">
    <text evidence="4">Belongs to the SYCE family.</text>
</comment>
<comment type="sequence caution" evidence="4">
    <conflict type="erroneous initiation">
        <sequence resource="EMBL-CDS" id="AAI09529"/>
    </conflict>
    <text>Truncated N-terminus.</text>
</comment>
<sequence>MAGRPGSSNAEAAGAVGPTDEARGQAESSQKIEDLMEMVKKLQKVGSLEPRVEVLINRINEVQQAKKKASEELGDARTVWETLQKELDSLSGEKVRLKEILSKKQETLRVLRLHCQDKENEAQRKQTMLQECKERISALNSQIEQEKNKQRQLRLDFEEQLEDLMGQYKDLWEFHKPERLALEISTLDSGKEQLLKEEKLVEAKLEDVKHRLCSQFGAKGHTINEGLFLRSPEAAAVVHLFEEENRKAQELLEAAAQRQEQLQQKCQQLQQKRQRLKEELEKLGVQVLAQAQSKQEEEAGLGEAANPKPLGVSEEKDQEPSTK</sequence>
<gene>
    <name type="primary">SYCE1</name>
</gene>
<keyword id="KW-0131">Cell cycle</keyword>
<keyword id="KW-0132">Cell division</keyword>
<keyword id="KW-0158">Chromosome</keyword>
<keyword id="KW-0175">Coiled coil</keyword>
<keyword id="KW-0469">Meiosis</keyword>
<keyword id="KW-0539">Nucleus</keyword>
<keyword id="KW-1185">Reference proteome</keyword>
<protein>
    <recommendedName>
        <fullName>Synaptonemal complex central element protein 1</fullName>
    </recommendedName>
</protein>
<proteinExistence type="evidence at transcript level"/>
<name>SYCE1_BOVIN</name>